<name>RL4_LACP7</name>
<gene>
    <name evidence="1" type="primary">rplD</name>
    <name type="ordered locus">Cphy_3666</name>
</gene>
<sequence length="206" mass="22813">MANVKVYNIEGKEVGSLELNDAIFGVEVNEHLMHMAVVSQLANKRQGTQSAKTRAEVSGGGRKPWRQKGTGHARQGSTRSPQWKGGGVVFAPKPRDYSFKMNRKEKSLAIKSALTSRVEAQKLIVLDSMNMDEIKTKKFKAVLENLKVNKALVVLDKKDENVILSARNIPTVRTATSNAINVYDIVKYDTLVITKDAVAQIEEVYA</sequence>
<reference key="1">
    <citation type="submission" date="2007-11" db="EMBL/GenBank/DDBJ databases">
        <title>Complete genome sequence of Clostridium phytofermentans ISDg.</title>
        <authorList>
            <person name="Leschine S.B."/>
            <person name="Warnick T.A."/>
            <person name="Blanchard J.L."/>
            <person name="Schnell D.J."/>
            <person name="Petit E.L."/>
            <person name="LaTouf W.G."/>
            <person name="Copeland A."/>
            <person name="Lucas S."/>
            <person name="Lapidus A."/>
            <person name="Barry K."/>
            <person name="Glavina del Rio T."/>
            <person name="Dalin E."/>
            <person name="Tice H."/>
            <person name="Pitluck S."/>
            <person name="Kiss H."/>
            <person name="Brettin T."/>
            <person name="Bruce D."/>
            <person name="Detter J.C."/>
            <person name="Han C."/>
            <person name="Kuske C."/>
            <person name="Schmutz J."/>
            <person name="Larimer F."/>
            <person name="Land M."/>
            <person name="Hauser L."/>
            <person name="Kyrpides N."/>
            <person name="Kim E.A."/>
            <person name="Richardson P."/>
        </authorList>
    </citation>
    <scope>NUCLEOTIDE SEQUENCE [LARGE SCALE GENOMIC DNA]</scope>
    <source>
        <strain>ATCC 700394 / DSM 18823 / ISDg</strain>
    </source>
</reference>
<comment type="function">
    <text evidence="1">One of the primary rRNA binding proteins, this protein initially binds near the 5'-end of the 23S rRNA. It is important during the early stages of 50S assembly. It makes multiple contacts with different domains of the 23S rRNA in the assembled 50S subunit and ribosome.</text>
</comment>
<comment type="function">
    <text evidence="1">Forms part of the polypeptide exit tunnel.</text>
</comment>
<comment type="subunit">
    <text evidence="1">Part of the 50S ribosomal subunit.</text>
</comment>
<comment type="similarity">
    <text evidence="1">Belongs to the universal ribosomal protein uL4 family.</text>
</comment>
<organism>
    <name type="scientific">Lachnoclostridium phytofermentans (strain ATCC 700394 / DSM 18823 / ISDg)</name>
    <name type="common">Clostridium phytofermentans</name>
    <dbReference type="NCBI Taxonomy" id="357809"/>
    <lineage>
        <taxon>Bacteria</taxon>
        <taxon>Bacillati</taxon>
        <taxon>Bacillota</taxon>
        <taxon>Clostridia</taxon>
        <taxon>Lachnospirales</taxon>
        <taxon>Lachnospiraceae</taxon>
    </lineage>
</organism>
<dbReference type="EMBL" id="CP000885">
    <property type="protein sequence ID" value="ABX44013.1"/>
    <property type="molecule type" value="Genomic_DNA"/>
</dbReference>
<dbReference type="RefSeq" id="WP_012201661.1">
    <property type="nucleotide sequence ID" value="NC_010001.1"/>
</dbReference>
<dbReference type="SMR" id="A9KJJ3"/>
<dbReference type="STRING" id="357809.Cphy_3666"/>
<dbReference type="KEGG" id="cpy:Cphy_3666"/>
<dbReference type="eggNOG" id="COG0088">
    <property type="taxonomic scope" value="Bacteria"/>
</dbReference>
<dbReference type="HOGENOM" id="CLU_041575_5_2_9"/>
<dbReference type="OrthoDB" id="9803201at2"/>
<dbReference type="Proteomes" id="UP000000370">
    <property type="component" value="Chromosome"/>
</dbReference>
<dbReference type="GO" id="GO:1990904">
    <property type="term" value="C:ribonucleoprotein complex"/>
    <property type="evidence" value="ECO:0007669"/>
    <property type="project" value="UniProtKB-KW"/>
</dbReference>
<dbReference type="GO" id="GO:0005840">
    <property type="term" value="C:ribosome"/>
    <property type="evidence" value="ECO:0007669"/>
    <property type="project" value="UniProtKB-KW"/>
</dbReference>
<dbReference type="GO" id="GO:0019843">
    <property type="term" value="F:rRNA binding"/>
    <property type="evidence" value="ECO:0007669"/>
    <property type="project" value="UniProtKB-UniRule"/>
</dbReference>
<dbReference type="GO" id="GO:0003735">
    <property type="term" value="F:structural constituent of ribosome"/>
    <property type="evidence" value="ECO:0007669"/>
    <property type="project" value="InterPro"/>
</dbReference>
<dbReference type="GO" id="GO:0006412">
    <property type="term" value="P:translation"/>
    <property type="evidence" value="ECO:0007669"/>
    <property type="project" value="UniProtKB-UniRule"/>
</dbReference>
<dbReference type="Gene3D" id="3.40.1370.10">
    <property type="match status" value="1"/>
</dbReference>
<dbReference type="HAMAP" id="MF_01328_B">
    <property type="entry name" value="Ribosomal_uL4_B"/>
    <property type="match status" value="1"/>
</dbReference>
<dbReference type="InterPro" id="IPR002136">
    <property type="entry name" value="Ribosomal_uL4"/>
</dbReference>
<dbReference type="InterPro" id="IPR013005">
    <property type="entry name" value="Ribosomal_uL4-like"/>
</dbReference>
<dbReference type="InterPro" id="IPR023574">
    <property type="entry name" value="Ribosomal_uL4_dom_sf"/>
</dbReference>
<dbReference type="NCBIfam" id="TIGR03953">
    <property type="entry name" value="rplD_bact"/>
    <property type="match status" value="1"/>
</dbReference>
<dbReference type="PANTHER" id="PTHR10746">
    <property type="entry name" value="50S RIBOSOMAL PROTEIN L4"/>
    <property type="match status" value="1"/>
</dbReference>
<dbReference type="PANTHER" id="PTHR10746:SF6">
    <property type="entry name" value="LARGE RIBOSOMAL SUBUNIT PROTEIN UL4M"/>
    <property type="match status" value="1"/>
</dbReference>
<dbReference type="Pfam" id="PF00573">
    <property type="entry name" value="Ribosomal_L4"/>
    <property type="match status" value="1"/>
</dbReference>
<dbReference type="SUPFAM" id="SSF52166">
    <property type="entry name" value="Ribosomal protein L4"/>
    <property type="match status" value="1"/>
</dbReference>
<feature type="chain" id="PRO_1000086514" description="Large ribosomal subunit protein uL4">
    <location>
        <begin position="1"/>
        <end position="206"/>
    </location>
</feature>
<feature type="region of interest" description="Disordered" evidence="2">
    <location>
        <begin position="43"/>
        <end position="86"/>
    </location>
</feature>
<feature type="compositionally biased region" description="Polar residues" evidence="2">
    <location>
        <begin position="43"/>
        <end position="52"/>
    </location>
</feature>
<keyword id="KW-1185">Reference proteome</keyword>
<keyword id="KW-0687">Ribonucleoprotein</keyword>
<keyword id="KW-0689">Ribosomal protein</keyword>
<keyword id="KW-0694">RNA-binding</keyword>
<keyword id="KW-0699">rRNA-binding</keyword>
<evidence type="ECO:0000255" key="1">
    <source>
        <dbReference type="HAMAP-Rule" id="MF_01328"/>
    </source>
</evidence>
<evidence type="ECO:0000256" key="2">
    <source>
        <dbReference type="SAM" id="MobiDB-lite"/>
    </source>
</evidence>
<evidence type="ECO:0000305" key="3"/>
<accession>A9KJJ3</accession>
<protein>
    <recommendedName>
        <fullName evidence="1">Large ribosomal subunit protein uL4</fullName>
    </recommendedName>
    <alternativeName>
        <fullName evidence="3">50S ribosomal protein L4</fullName>
    </alternativeName>
</protein>
<proteinExistence type="inferred from homology"/>